<gene>
    <name evidence="1" type="primary">oadG</name>
    <name type="ordered locus">SeAg_B0063</name>
</gene>
<keyword id="KW-1003">Cell membrane</keyword>
<keyword id="KW-0406">Ion transport</keyword>
<keyword id="KW-0472">Membrane</keyword>
<keyword id="KW-0915">Sodium</keyword>
<keyword id="KW-0739">Sodium transport</keyword>
<keyword id="KW-1278">Translocase</keyword>
<keyword id="KW-0812">Transmembrane</keyword>
<keyword id="KW-1133">Transmembrane helix</keyword>
<keyword id="KW-0813">Transport</keyword>
<proteinExistence type="inferred from homology"/>
<name>OADG_SALA4</name>
<accession>B5F736</accession>
<protein>
    <recommendedName>
        <fullName evidence="1">Probable oxaloacetate decarboxylase gamma chain</fullName>
        <ecNumber evidence="1">7.2.4.2</ecNumber>
    </recommendedName>
</protein>
<evidence type="ECO:0000255" key="1">
    <source>
        <dbReference type="HAMAP-Rule" id="MF_00404"/>
    </source>
</evidence>
<reference key="1">
    <citation type="journal article" date="2011" name="J. Bacteriol.">
        <title>Comparative genomics of 28 Salmonella enterica isolates: evidence for CRISPR-mediated adaptive sublineage evolution.</title>
        <authorList>
            <person name="Fricke W.F."/>
            <person name="Mammel M.K."/>
            <person name="McDermott P.F."/>
            <person name="Tartera C."/>
            <person name="White D.G."/>
            <person name="Leclerc J.E."/>
            <person name="Ravel J."/>
            <person name="Cebula T.A."/>
        </authorList>
    </citation>
    <scope>NUCLEOTIDE SEQUENCE [LARGE SCALE GENOMIC DNA]</scope>
    <source>
        <strain>SL483</strain>
    </source>
</reference>
<comment type="function">
    <text evidence="1">Catalyzes the decarboxylation of oxaloacetate coupled to Na(+) translocation.</text>
</comment>
<comment type="catalytic activity">
    <reaction evidence="1">
        <text>oxaloacetate + 2 Na(+)(in) + H(+) = pyruvate + 2 Na(+)(out) + CO2</text>
        <dbReference type="Rhea" id="RHEA:57724"/>
        <dbReference type="ChEBI" id="CHEBI:15361"/>
        <dbReference type="ChEBI" id="CHEBI:15378"/>
        <dbReference type="ChEBI" id="CHEBI:16452"/>
        <dbReference type="ChEBI" id="CHEBI:16526"/>
        <dbReference type="ChEBI" id="CHEBI:29101"/>
        <dbReference type="EC" id="7.2.4.2"/>
    </reaction>
</comment>
<comment type="cofactor">
    <cofactor evidence="1">
        <name>Na(+)</name>
        <dbReference type="ChEBI" id="CHEBI:29101"/>
    </cofactor>
</comment>
<comment type="subunit">
    <text evidence="1">Heterotrimer of an alpha, a beta and a gamma subunit.</text>
</comment>
<comment type="subcellular location">
    <subcellularLocation>
        <location evidence="1">Cell membrane</location>
        <topology evidence="1">Single-pass membrane protein</topology>
    </subcellularLocation>
</comment>
<comment type="similarity">
    <text evidence="1">Belongs to the OadG family.</text>
</comment>
<sequence>MNEAVLLGEGFTLMFLGMGFVLSFLFLLIFAIRGMSAVITRFFPEPVAAPAPRAVPAVDDFTRLKPVIAAAIHHHRLNA</sequence>
<dbReference type="EC" id="7.2.4.2" evidence="1"/>
<dbReference type="EMBL" id="CP001138">
    <property type="protein sequence ID" value="ACH50220.1"/>
    <property type="molecule type" value="Genomic_DNA"/>
</dbReference>
<dbReference type="RefSeq" id="WP_001001151.1">
    <property type="nucleotide sequence ID" value="NC_011149.1"/>
</dbReference>
<dbReference type="SMR" id="B5F736"/>
<dbReference type="KEGG" id="sea:SeAg_B0063"/>
<dbReference type="HOGENOM" id="CLU_168750_3_2_6"/>
<dbReference type="Proteomes" id="UP000008819">
    <property type="component" value="Chromosome"/>
</dbReference>
<dbReference type="GO" id="GO:0005886">
    <property type="term" value="C:plasma membrane"/>
    <property type="evidence" value="ECO:0007669"/>
    <property type="project" value="UniProtKB-SubCell"/>
</dbReference>
<dbReference type="GO" id="GO:0015451">
    <property type="term" value="F:decarboxylation-driven active transmembrane transporter activity"/>
    <property type="evidence" value="ECO:0007669"/>
    <property type="project" value="UniProtKB-EC"/>
</dbReference>
<dbReference type="GO" id="GO:0008948">
    <property type="term" value="F:oxaloacetate decarboxylase activity"/>
    <property type="evidence" value="ECO:0007669"/>
    <property type="project" value="UniProtKB-UniRule"/>
</dbReference>
<dbReference type="GO" id="GO:0015081">
    <property type="term" value="F:sodium ion transmembrane transporter activity"/>
    <property type="evidence" value="ECO:0007669"/>
    <property type="project" value="UniProtKB-UniRule"/>
</dbReference>
<dbReference type="GO" id="GO:0036376">
    <property type="term" value="P:sodium ion export across plasma membrane"/>
    <property type="evidence" value="ECO:0007669"/>
    <property type="project" value="InterPro"/>
</dbReference>
<dbReference type="HAMAP" id="MF_00404">
    <property type="entry name" value="OadG"/>
    <property type="match status" value="1"/>
</dbReference>
<dbReference type="InterPro" id="IPR005899">
    <property type="entry name" value="Na_pump_deCOase"/>
</dbReference>
<dbReference type="InterPro" id="IPR023424">
    <property type="entry name" value="OadG"/>
</dbReference>
<dbReference type="NCBIfam" id="TIGR01195">
    <property type="entry name" value="oadG_fam"/>
    <property type="match status" value="1"/>
</dbReference>
<dbReference type="NCBIfam" id="NF002792">
    <property type="entry name" value="PRK02919.1"/>
    <property type="match status" value="1"/>
</dbReference>
<dbReference type="Pfam" id="PF04277">
    <property type="entry name" value="OAD_gamma"/>
    <property type="match status" value="1"/>
</dbReference>
<feature type="chain" id="PRO_1000123547" description="Probable oxaloacetate decarboxylase gamma chain">
    <location>
        <begin position="1"/>
        <end position="79"/>
    </location>
</feature>
<feature type="transmembrane region" description="Helical" evidence="1">
    <location>
        <begin position="12"/>
        <end position="32"/>
    </location>
</feature>
<organism>
    <name type="scientific">Salmonella agona (strain SL483)</name>
    <dbReference type="NCBI Taxonomy" id="454166"/>
    <lineage>
        <taxon>Bacteria</taxon>
        <taxon>Pseudomonadati</taxon>
        <taxon>Pseudomonadota</taxon>
        <taxon>Gammaproteobacteria</taxon>
        <taxon>Enterobacterales</taxon>
        <taxon>Enterobacteriaceae</taxon>
        <taxon>Salmonella</taxon>
    </lineage>
</organism>